<gene>
    <name evidence="1" type="primary">nuoC</name>
    <name type="ordered locus">COSY_0231</name>
</gene>
<organism>
    <name type="scientific">Vesicomyosocius okutanii subsp. Calyptogena okutanii (strain HA)</name>
    <dbReference type="NCBI Taxonomy" id="412965"/>
    <lineage>
        <taxon>Bacteria</taxon>
        <taxon>Pseudomonadati</taxon>
        <taxon>Pseudomonadota</taxon>
        <taxon>Gammaproteobacteria</taxon>
        <taxon>Candidatus Pseudothioglobaceae</taxon>
        <taxon>Candidatus Vesicomyosocius</taxon>
    </lineage>
</organism>
<comment type="function">
    <text evidence="1">NDH-1 shuttles electrons from NADH, via FMN and iron-sulfur (Fe-S) centers, to quinones in the respiratory chain. The immediate electron acceptor for the enzyme in this species is believed to be ubiquinone. Couples the redox reaction to proton translocation (for every two electrons transferred, four hydrogen ions are translocated across the cytoplasmic membrane), and thus conserves the redox energy in a proton gradient.</text>
</comment>
<comment type="catalytic activity">
    <reaction evidence="1">
        <text>a quinone + NADH + 5 H(+)(in) = a quinol + NAD(+) + 4 H(+)(out)</text>
        <dbReference type="Rhea" id="RHEA:57888"/>
        <dbReference type="ChEBI" id="CHEBI:15378"/>
        <dbReference type="ChEBI" id="CHEBI:24646"/>
        <dbReference type="ChEBI" id="CHEBI:57540"/>
        <dbReference type="ChEBI" id="CHEBI:57945"/>
        <dbReference type="ChEBI" id="CHEBI:132124"/>
    </reaction>
</comment>
<comment type="subunit">
    <text evidence="1">NDH-1 is composed of 14 different subunits. Subunits NuoB, C, D, E, F, and G constitute the peripheral sector of the complex.</text>
</comment>
<comment type="subcellular location">
    <subcellularLocation>
        <location evidence="1">Cell inner membrane</location>
        <topology evidence="1">Peripheral membrane protein</topology>
        <orientation evidence="1">Cytoplasmic side</orientation>
    </subcellularLocation>
</comment>
<comment type="similarity">
    <text evidence="1">Belongs to the complex I 30 kDa subunit family.</text>
</comment>
<reference key="1">
    <citation type="journal article" date="2007" name="Curr. Biol.">
        <title>Reduced genome of the thioautotrophic intracellular symbiont in a deep-sea clam, Calyptogena okutanii.</title>
        <authorList>
            <person name="Kuwahara H."/>
            <person name="Yoshida T."/>
            <person name="Takaki Y."/>
            <person name="Shimamura S."/>
            <person name="Nishi S."/>
            <person name="Harada M."/>
            <person name="Matsuyama K."/>
            <person name="Takishita K."/>
            <person name="Kawato M."/>
            <person name="Uematsu K."/>
            <person name="Fujiwara Y."/>
            <person name="Sato T."/>
            <person name="Kato C."/>
            <person name="Kitagawa M."/>
            <person name="Kato I."/>
            <person name="Maruyama T."/>
        </authorList>
    </citation>
    <scope>NUCLEOTIDE SEQUENCE [LARGE SCALE GENOMIC DNA]</scope>
    <source>
        <strain>HA</strain>
    </source>
</reference>
<dbReference type="EC" id="7.1.1.-" evidence="1"/>
<dbReference type="EMBL" id="AP009247">
    <property type="protein sequence ID" value="BAF61361.1"/>
    <property type="molecule type" value="Genomic_DNA"/>
</dbReference>
<dbReference type="RefSeq" id="WP_011929631.1">
    <property type="nucleotide sequence ID" value="NC_009465.1"/>
</dbReference>
<dbReference type="SMR" id="A5CXF9"/>
<dbReference type="STRING" id="412965.COSY_0231"/>
<dbReference type="KEGG" id="vok:COSY_0231"/>
<dbReference type="eggNOG" id="COG0852">
    <property type="taxonomic scope" value="Bacteria"/>
</dbReference>
<dbReference type="HOGENOM" id="CLU_042628_2_1_6"/>
<dbReference type="OrthoDB" id="9803286at2"/>
<dbReference type="Proteomes" id="UP000000247">
    <property type="component" value="Chromosome"/>
</dbReference>
<dbReference type="GO" id="GO:0005886">
    <property type="term" value="C:plasma membrane"/>
    <property type="evidence" value="ECO:0007669"/>
    <property type="project" value="UniProtKB-SubCell"/>
</dbReference>
<dbReference type="GO" id="GO:0008137">
    <property type="term" value="F:NADH dehydrogenase (ubiquinone) activity"/>
    <property type="evidence" value="ECO:0007669"/>
    <property type="project" value="InterPro"/>
</dbReference>
<dbReference type="GO" id="GO:0050136">
    <property type="term" value="F:NADH:ubiquinone reductase (non-electrogenic) activity"/>
    <property type="evidence" value="ECO:0007669"/>
    <property type="project" value="UniProtKB-UniRule"/>
</dbReference>
<dbReference type="GO" id="GO:0048038">
    <property type="term" value="F:quinone binding"/>
    <property type="evidence" value="ECO:0007669"/>
    <property type="project" value="UniProtKB-KW"/>
</dbReference>
<dbReference type="Gene3D" id="3.30.460.80">
    <property type="entry name" value="NADH:ubiquinone oxidoreductase, 30kDa subunit"/>
    <property type="match status" value="1"/>
</dbReference>
<dbReference type="HAMAP" id="MF_01357">
    <property type="entry name" value="NDH1_NuoC"/>
    <property type="match status" value="1"/>
</dbReference>
<dbReference type="InterPro" id="IPR010218">
    <property type="entry name" value="NADH_DH_suC"/>
</dbReference>
<dbReference type="InterPro" id="IPR037232">
    <property type="entry name" value="NADH_quin_OxRdtase_su_C/D-like"/>
</dbReference>
<dbReference type="InterPro" id="IPR001268">
    <property type="entry name" value="NADH_UbQ_OxRdtase_30kDa_su"/>
</dbReference>
<dbReference type="InterPro" id="IPR020396">
    <property type="entry name" value="NADH_UbQ_OxRdtase_CS"/>
</dbReference>
<dbReference type="NCBIfam" id="TIGR01961">
    <property type="entry name" value="NuoC_fam"/>
    <property type="match status" value="1"/>
</dbReference>
<dbReference type="NCBIfam" id="NF004730">
    <property type="entry name" value="PRK06074.1-1"/>
    <property type="match status" value="1"/>
</dbReference>
<dbReference type="PANTHER" id="PTHR10884:SF14">
    <property type="entry name" value="NADH DEHYDROGENASE [UBIQUINONE] IRON-SULFUR PROTEIN 3, MITOCHONDRIAL"/>
    <property type="match status" value="1"/>
</dbReference>
<dbReference type="PANTHER" id="PTHR10884">
    <property type="entry name" value="NADH DEHYDROGENASE UBIQUINONE IRON-SULFUR PROTEIN 3"/>
    <property type="match status" value="1"/>
</dbReference>
<dbReference type="Pfam" id="PF00329">
    <property type="entry name" value="Complex1_30kDa"/>
    <property type="match status" value="1"/>
</dbReference>
<dbReference type="SUPFAM" id="SSF143243">
    <property type="entry name" value="Nqo5-like"/>
    <property type="match status" value="1"/>
</dbReference>
<dbReference type="PROSITE" id="PS00542">
    <property type="entry name" value="COMPLEX1_30K"/>
    <property type="match status" value="1"/>
</dbReference>
<name>NUOC_VESOH</name>
<keyword id="KW-0997">Cell inner membrane</keyword>
<keyword id="KW-1003">Cell membrane</keyword>
<keyword id="KW-0472">Membrane</keyword>
<keyword id="KW-0520">NAD</keyword>
<keyword id="KW-0874">Quinone</keyword>
<keyword id="KW-1185">Reference proteome</keyword>
<keyword id="KW-1278">Translocase</keyword>
<keyword id="KW-0813">Transport</keyword>
<keyword id="KW-0830">Ubiquinone</keyword>
<evidence type="ECO:0000255" key="1">
    <source>
        <dbReference type="HAMAP-Rule" id="MF_01357"/>
    </source>
</evidence>
<accession>A5CXF9</accession>
<sequence length="204" mass="23582">MQDLKTSLVEVFGKTNLVESFDELTLTVGSQNIIKTCLKLRDFFSFDTLIDLCGVDYLTYGQSDWNGNASASGFSRGRSHQGLKDIHEERFAVVYHLLSVSKNKRIRVKSFVDEVEPIIKSVTDIWASADWYEREAFDLMGILFENHTDLRRILTDYGFTGHPLRKDFPMIGEVEMRYDEDLCRVIYEKVSIEPNVNVPRVIRK</sequence>
<protein>
    <recommendedName>
        <fullName evidence="1">NADH-quinone oxidoreductase subunit C</fullName>
        <ecNumber evidence="1">7.1.1.-</ecNumber>
    </recommendedName>
    <alternativeName>
        <fullName evidence="1">NADH dehydrogenase I subunit C</fullName>
    </alternativeName>
    <alternativeName>
        <fullName evidence="1">NDH-1 subunit C</fullName>
    </alternativeName>
</protein>
<proteinExistence type="inferred from homology"/>
<feature type="chain" id="PRO_0000358220" description="NADH-quinone oxidoreductase subunit C">
    <location>
        <begin position="1"/>
        <end position="204"/>
    </location>
</feature>